<reference key="1">
    <citation type="journal article" date="2003" name="Proc. Natl. Acad. Sci. U.S.A.">
        <title>Genome sequence of the cyanobacterium Prochlorococcus marinus SS120, a nearly minimal oxyphototrophic genome.</title>
        <authorList>
            <person name="Dufresne A."/>
            <person name="Salanoubat M."/>
            <person name="Partensky F."/>
            <person name="Artiguenave F."/>
            <person name="Axmann I.M."/>
            <person name="Barbe V."/>
            <person name="Duprat S."/>
            <person name="Galperin M.Y."/>
            <person name="Koonin E.V."/>
            <person name="Le Gall F."/>
            <person name="Makarova K.S."/>
            <person name="Ostrowski M."/>
            <person name="Oztas S."/>
            <person name="Robert C."/>
            <person name="Rogozin I.B."/>
            <person name="Scanlan D.J."/>
            <person name="Tandeau de Marsac N."/>
            <person name="Weissenbach J."/>
            <person name="Wincker P."/>
            <person name="Wolf Y.I."/>
            <person name="Hess W.R."/>
        </authorList>
    </citation>
    <scope>NUCLEOTIDE SEQUENCE [LARGE SCALE GENOMIC DNA]</scope>
    <source>
        <strain>SARG / CCMP1375 / SS120</strain>
    </source>
</reference>
<accession>Q7VDK5</accession>
<feature type="chain" id="PRO_0000204404" description="Photosystem I reaction center subunit IV">
    <location>
        <begin position="1"/>
        <end position="69"/>
    </location>
</feature>
<comment type="function">
    <text evidence="1">Stabilizes the interaction between PsaC and the PSI core, assists the docking of the ferredoxin to PSI and interacts with ferredoxin-NADP oxidoreductase.</text>
</comment>
<comment type="subcellular location">
    <subcellularLocation>
        <location evidence="1">Cellular thylakoid membrane</location>
        <topology evidence="1">Peripheral membrane protein</topology>
    </subcellularLocation>
</comment>
<comment type="similarity">
    <text evidence="2">Belongs to the PsaE family.</text>
</comment>
<keyword id="KW-0472">Membrane</keyword>
<keyword id="KW-0602">Photosynthesis</keyword>
<keyword id="KW-0603">Photosystem I</keyword>
<keyword id="KW-1185">Reference proteome</keyword>
<keyword id="KW-0793">Thylakoid</keyword>
<protein>
    <recommendedName>
        <fullName>Photosystem I reaction center subunit IV</fullName>
    </recommendedName>
</protein>
<organism>
    <name type="scientific">Prochlorococcus marinus (strain SARG / CCMP1375 / SS120)</name>
    <dbReference type="NCBI Taxonomy" id="167539"/>
    <lineage>
        <taxon>Bacteria</taxon>
        <taxon>Bacillati</taxon>
        <taxon>Cyanobacteriota</taxon>
        <taxon>Cyanophyceae</taxon>
        <taxon>Synechococcales</taxon>
        <taxon>Prochlorococcaceae</taxon>
        <taxon>Prochlorococcus</taxon>
    </lineage>
</organism>
<sequence>MAISRGDKVRVKRPESYWYNEIGKVASVDTSGIKYPVVVRFEKVNYSAFSGVDGGNNTNNFAEAELEAV</sequence>
<dbReference type="EMBL" id="AE017126">
    <property type="protein sequence ID" value="AAP99417.1"/>
    <property type="molecule type" value="Genomic_DNA"/>
</dbReference>
<dbReference type="RefSeq" id="NP_874765.1">
    <property type="nucleotide sequence ID" value="NC_005042.1"/>
</dbReference>
<dbReference type="RefSeq" id="WP_011124526.1">
    <property type="nucleotide sequence ID" value="NC_005042.1"/>
</dbReference>
<dbReference type="SMR" id="Q7VDK5"/>
<dbReference type="STRING" id="167539.Pro_0371"/>
<dbReference type="EnsemblBacteria" id="AAP99417">
    <property type="protein sequence ID" value="AAP99417"/>
    <property type="gene ID" value="Pro_0371"/>
</dbReference>
<dbReference type="KEGG" id="pma:Pro_0371"/>
<dbReference type="PATRIC" id="fig|167539.5.peg.379"/>
<dbReference type="eggNOG" id="ENOG503313D">
    <property type="taxonomic scope" value="Bacteria"/>
</dbReference>
<dbReference type="HOGENOM" id="CLU_136462_2_1_3"/>
<dbReference type="OrthoDB" id="427926at2"/>
<dbReference type="Proteomes" id="UP000001420">
    <property type="component" value="Chromosome"/>
</dbReference>
<dbReference type="GO" id="GO:0009538">
    <property type="term" value="C:photosystem I reaction center"/>
    <property type="evidence" value="ECO:0007669"/>
    <property type="project" value="InterPro"/>
</dbReference>
<dbReference type="GO" id="GO:0031676">
    <property type="term" value="C:plasma membrane-derived thylakoid membrane"/>
    <property type="evidence" value="ECO:0007669"/>
    <property type="project" value="UniProtKB-SubCell"/>
</dbReference>
<dbReference type="GO" id="GO:0015979">
    <property type="term" value="P:photosynthesis"/>
    <property type="evidence" value="ECO:0007669"/>
    <property type="project" value="UniProtKB-UniRule"/>
</dbReference>
<dbReference type="Gene3D" id="2.30.30.50">
    <property type="match status" value="1"/>
</dbReference>
<dbReference type="HAMAP" id="MF_00613">
    <property type="entry name" value="PSI_PsaE"/>
    <property type="match status" value="1"/>
</dbReference>
<dbReference type="InterPro" id="IPR008990">
    <property type="entry name" value="Elect_transpt_acc-like_dom_sf"/>
</dbReference>
<dbReference type="InterPro" id="IPR003375">
    <property type="entry name" value="PSI_PsaE"/>
</dbReference>
<dbReference type="NCBIfam" id="NF002745">
    <property type="entry name" value="PRK02749.1"/>
    <property type="match status" value="1"/>
</dbReference>
<dbReference type="PANTHER" id="PTHR34549">
    <property type="entry name" value="PHOTOSYSTEM I REACTION CENTER SUBUNIT IV A, CHLOROPLASTIC-RELATED"/>
    <property type="match status" value="1"/>
</dbReference>
<dbReference type="PANTHER" id="PTHR34549:SF2">
    <property type="entry name" value="PHOTOSYSTEM I SUBUNIT IV"/>
    <property type="match status" value="1"/>
</dbReference>
<dbReference type="Pfam" id="PF02427">
    <property type="entry name" value="PSI_PsaE"/>
    <property type="match status" value="1"/>
</dbReference>
<dbReference type="SUPFAM" id="SSF50090">
    <property type="entry name" value="Electron transport accessory proteins"/>
    <property type="match status" value="1"/>
</dbReference>
<evidence type="ECO:0000250" key="1"/>
<evidence type="ECO:0000305" key="2"/>
<name>PSAE_PROMA</name>
<gene>
    <name type="primary">psaE</name>
    <name type="ordered locus">Pro_0371</name>
</gene>
<proteinExistence type="inferred from homology"/>